<keyword id="KW-0963">Cytoplasm</keyword>
<keyword id="KW-0206">Cytoskeleton</keyword>
<keyword id="KW-0342">GTP-binding</keyword>
<keyword id="KW-0460">Magnesium</keyword>
<keyword id="KW-0479">Metal-binding</keyword>
<keyword id="KW-0493">Microtubule</keyword>
<keyword id="KW-0547">Nucleotide-binding</keyword>
<keyword id="KW-1185">Reference proteome</keyword>
<reference key="1">
    <citation type="journal article" date="1998" name="Plant Mol. Biol.">
        <title>Brassinolides promote the expression of a new Cicer arietinum beta-tubulin gene involved in the epicotyl elongation.</title>
        <authorList>
            <person name="Munoz F.J."/>
            <person name="Labrador E."/>
            <person name="Dopico B."/>
        </authorList>
    </citation>
    <scope>NUCLEOTIDE SEQUENCE [MRNA]</scope>
    <source>
        <strain>cv. Castellana</strain>
        <tissue>Etiolated epicotyl</tissue>
    </source>
</reference>
<organism>
    <name type="scientific">Cicer arietinum</name>
    <name type="common">Chickpea</name>
    <name type="synonym">Garbanzo</name>
    <dbReference type="NCBI Taxonomy" id="3827"/>
    <lineage>
        <taxon>Eukaryota</taxon>
        <taxon>Viridiplantae</taxon>
        <taxon>Streptophyta</taxon>
        <taxon>Embryophyta</taxon>
        <taxon>Tracheophyta</taxon>
        <taxon>Spermatophyta</taxon>
        <taxon>Magnoliopsida</taxon>
        <taxon>eudicotyledons</taxon>
        <taxon>Gunneridae</taxon>
        <taxon>Pentapetalae</taxon>
        <taxon>rosids</taxon>
        <taxon>fabids</taxon>
        <taxon>Fabales</taxon>
        <taxon>Fabaceae</taxon>
        <taxon>Papilionoideae</taxon>
        <taxon>50 kb inversion clade</taxon>
        <taxon>NPAAA clade</taxon>
        <taxon>Hologalegina</taxon>
        <taxon>IRL clade</taxon>
        <taxon>Cicereae</taxon>
        <taxon>Cicer</taxon>
    </lineage>
</organism>
<dbReference type="EMBL" id="X98406">
    <property type="protein sequence ID" value="CAA67056.1"/>
    <property type="molecule type" value="mRNA"/>
</dbReference>
<dbReference type="RefSeq" id="NP_001265938.1">
    <property type="nucleotide sequence ID" value="NM_001279009.1"/>
</dbReference>
<dbReference type="SMR" id="Q39445"/>
<dbReference type="STRING" id="3827.Q39445"/>
<dbReference type="PaxDb" id="3827-XP_004500938.1"/>
<dbReference type="GeneID" id="101506098"/>
<dbReference type="KEGG" id="cam:101506098"/>
<dbReference type="eggNOG" id="KOG1375">
    <property type="taxonomic scope" value="Eukaryota"/>
</dbReference>
<dbReference type="OrthoDB" id="1662883at2759"/>
<dbReference type="Proteomes" id="UP000087171">
    <property type="component" value="Chromosome Ca5"/>
</dbReference>
<dbReference type="GO" id="GO:0005737">
    <property type="term" value="C:cytoplasm"/>
    <property type="evidence" value="ECO:0007669"/>
    <property type="project" value="UniProtKB-KW"/>
</dbReference>
<dbReference type="GO" id="GO:0005874">
    <property type="term" value="C:microtubule"/>
    <property type="evidence" value="ECO:0007669"/>
    <property type="project" value="UniProtKB-KW"/>
</dbReference>
<dbReference type="GO" id="GO:0005525">
    <property type="term" value="F:GTP binding"/>
    <property type="evidence" value="ECO:0007669"/>
    <property type="project" value="UniProtKB-KW"/>
</dbReference>
<dbReference type="GO" id="GO:0003924">
    <property type="term" value="F:GTPase activity"/>
    <property type="evidence" value="ECO:0007669"/>
    <property type="project" value="InterPro"/>
</dbReference>
<dbReference type="GO" id="GO:0046872">
    <property type="term" value="F:metal ion binding"/>
    <property type="evidence" value="ECO:0007669"/>
    <property type="project" value="UniProtKB-KW"/>
</dbReference>
<dbReference type="GO" id="GO:0005200">
    <property type="term" value="F:structural constituent of cytoskeleton"/>
    <property type="evidence" value="ECO:0007669"/>
    <property type="project" value="InterPro"/>
</dbReference>
<dbReference type="GO" id="GO:0007017">
    <property type="term" value="P:microtubule-based process"/>
    <property type="evidence" value="ECO:0007669"/>
    <property type="project" value="InterPro"/>
</dbReference>
<dbReference type="CDD" id="cd02187">
    <property type="entry name" value="beta_tubulin"/>
    <property type="match status" value="1"/>
</dbReference>
<dbReference type="FunFam" id="1.10.287.600:FF:000002">
    <property type="entry name" value="Tubulin beta chain"/>
    <property type="match status" value="1"/>
</dbReference>
<dbReference type="FunFam" id="3.30.1330.20:FF:000002">
    <property type="entry name" value="Tubulin beta chain"/>
    <property type="match status" value="1"/>
</dbReference>
<dbReference type="FunFam" id="3.40.50.1440:FF:000005">
    <property type="entry name" value="Tubulin beta chain"/>
    <property type="match status" value="1"/>
</dbReference>
<dbReference type="Gene3D" id="1.10.287.600">
    <property type="entry name" value="Helix hairpin bin"/>
    <property type="match status" value="1"/>
</dbReference>
<dbReference type="Gene3D" id="3.30.1330.20">
    <property type="entry name" value="Tubulin/FtsZ, C-terminal domain"/>
    <property type="match status" value="1"/>
</dbReference>
<dbReference type="Gene3D" id="3.40.50.1440">
    <property type="entry name" value="Tubulin/FtsZ, GTPase domain"/>
    <property type="match status" value="1"/>
</dbReference>
<dbReference type="InterPro" id="IPR013838">
    <property type="entry name" value="Beta-tubulin_BS"/>
</dbReference>
<dbReference type="InterPro" id="IPR002453">
    <property type="entry name" value="Beta_tubulin"/>
</dbReference>
<dbReference type="InterPro" id="IPR008280">
    <property type="entry name" value="Tub_FtsZ_C"/>
</dbReference>
<dbReference type="InterPro" id="IPR000217">
    <property type="entry name" value="Tubulin"/>
</dbReference>
<dbReference type="InterPro" id="IPR037103">
    <property type="entry name" value="Tubulin/FtsZ-like_C"/>
</dbReference>
<dbReference type="InterPro" id="IPR018316">
    <property type="entry name" value="Tubulin/FtsZ_2-layer-sand-dom"/>
</dbReference>
<dbReference type="InterPro" id="IPR036525">
    <property type="entry name" value="Tubulin/FtsZ_GTPase_sf"/>
</dbReference>
<dbReference type="InterPro" id="IPR023123">
    <property type="entry name" value="Tubulin_C"/>
</dbReference>
<dbReference type="InterPro" id="IPR017975">
    <property type="entry name" value="Tubulin_CS"/>
</dbReference>
<dbReference type="InterPro" id="IPR003008">
    <property type="entry name" value="Tubulin_FtsZ_GTPase"/>
</dbReference>
<dbReference type="PANTHER" id="PTHR11588">
    <property type="entry name" value="TUBULIN"/>
    <property type="match status" value="1"/>
</dbReference>
<dbReference type="Pfam" id="PF00091">
    <property type="entry name" value="Tubulin"/>
    <property type="match status" value="1"/>
</dbReference>
<dbReference type="Pfam" id="PF03953">
    <property type="entry name" value="Tubulin_C"/>
    <property type="match status" value="1"/>
</dbReference>
<dbReference type="PRINTS" id="PR01163">
    <property type="entry name" value="BETATUBULIN"/>
</dbReference>
<dbReference type="PRINTS" id="PR01161">
    <property type="entry name" value="TUBULIN"/>
</dbReference>
<dbReference type="SMART" id="SM00864">
    <property type="entry name" value="Tubulin"/>
    <property type="match status" value="1"/>
</dbReference>
<dbReference type="SMART" id="SM00865">
    <property type="entry name" value="Tubulin_C"/>
    <property type="match status" value="1"/>
</dbReference>
<dbReference type="SUPFAM" id="SSF55307">
    <property type="entry name" value="Tubulin C-terminal domain-like"/>
    <property type="match status" value="1"/>
</dbReference>
<dbReference type="SUPFAM" id="SSF52490">
    <property type="entry name" value="Tubulin nucleotide-binding domain-like"/>
    <property type="match status" value="1"/>
</dbReference>
<dbReference type="PROSITE" id="PS00227">
    <property type="entry name" value="TUBULIN"/>
    <property type="match status" value="1"/>
</dbReference>
<dbReference type="PROSITE" id="PS00228">
    <property type="entry name" value="TUBULIN_B_AUTOREG"/>
    <property type="match status" value="1"/>
</dbReference>
<accession>Q39445</accession>
<feature type="chain" id="PRO_0000048336" description="Tubulin beta chain">
    <location>
        <begin position="1"/>
        <end position="449"/>
    </location>
</feature>
<feature type="binding site" evidence="2">
    <location>
        <position position="11"/>
    </location>
    <ligand>
        <name>GTP</name>
        <dbReference type="ChEBI" id="CHEBI:37565"/>
    </ligand>
</feature>
<feature type="binding site" evidence="1">
    <location>
        <position position="71"/>
    </location>
    <ligand>
        <name>GTP</name>
        <dbReference type="ChEBI" id="CHEBI:37565"/>
    </ligand>
</feature>
<feature type="binding site" evidence="1">
    <location>
        <position position="71"/>
    </location>
    <ligand>
        <name>Mg(2+)</name>
        <dbReference type="ChEBI" id="CHEBI:18420"/>
    </ligand>
</feature>
<feature type="binding site" evidence="2">
    <location>
        <position position="140"/>
    </location>
    <ligand>
        <name>GTP</name>
        <dbReference type="ChEBI" id="CHEBI:37565"/>
    </ligand>
</feature>
<feature type="binding site" evidence="2">
    <location>
        <position position="144"/>
    </location>
    <ligand>
        <name>GTP</name>
        <dbReference type="ChEBI" id="CHEBI:37565"/>
    </ligand>
</feature>
<feature type="binding site" evidence="2">
    <location>
        <position position="145"/>
    </location>
    <ligand>
        <name>GTP</name>
        <dbReference type="ChEBI" id="CHEBI:37565"/>
    </ligand>
</feature>
<feature type="binding site" evidence="2">
    <location>
        <position position="146"/>
    </location>
    <ligand>
        <name>GTP</name>
        <dbReference type="ChEBI" id="CHEBI:37565"/>
    </ligand>
</feature>
<feature type="binding site" evidence="2">
    <location>
        <position position="206"/>
    </location>
    <ligand>
        <name>GTP</name>
        <dbReference type="ChEBI" id="CHEBI:37565"/>
    </ligand>
</feature>
<feature type="binding site" evidence="2">
    <location>
        <position position="228"/>
    </location>
    <ligand>
        <name>GTP</name>
        <dbReference type="ChEBI" id="CHEBI:37565"/>
    </ligand>
</feature>
<evidence type="ECO:0000250" key="1">
    <source>
        <dbReference type="UniProtKB" id="P68363"/>
    </source>
</evidence>
<evidence type="ECO:0000250" key="2">
    <source>
        <dbReference type="UniProtKB" id="Q13509"/>
    </source>
</evidence>
<evidence type="ECO:0000305" key="3"/>
<comment type="function">
    <text>Tubulin is the major constituent of microtubules, a cylinder consisting of laterally associated linear protofilaments composed of alpha- and beta-tubulin heterodimers. Microtubules grow by the addition of GTP-tubulin dimers to the microtubule end, where a stabilizing cap forms. Below the cap, tubulin dimers are in GDP-bound state, owing to GTPase activity of alpha-tubulin.</text>
</comment>
<comment type="cofactor">
    <cofactor evidence="1">
        <name>Mg(2+)</name>
        <dbReference type="ChEBI" id="CHEBI:18420"/>
    </cofactor>
</comment>
<comment type="subunit">
    <text>Dimer of alpha and beta chains. A typical microtubule is a hollow water-filled tube with an outer diameter of 25 nm and an inner diameter of 15 nM. Alpha-beta heterodimers associate head-to-tail to form protofilaments running lengthwise along the microtubule wall with the beta-tubulin subunit facing the microtubule plus end conferring a structural polarity. Microtubules usually have 13 protofilaments but different protofilament numbers can be found in some organisms and specialized cells.</text>
</comment>
<comment type="subcellular location">
    <subcellularLocation>
        <location>Cytoplasm</location>
        <location>Cytoskeleton</location>
    </subcellularLocation>
</comment>
<comment type="similarity">
    <text evidence="3">Belongs to the tubulin family.</text>
</comment>
<gene>
    <name type="primary">TUBB</name>
</gene>
<name>TBB_CICAR</name>
<protein>
    <recommendedName>
        <fullName>Tubulin beta chain</fullName>
    </recommendedName>
    <alternativeName>
        <fullName>Beta-tubulin</fullName>
    </alternativeName>
</protein>
<proteinExistence type="evidence at transcript level"/>
<sequence>MREILHVQGGQCGNQIGSKFWEVICDEHGIDQTGKYISEGGSDTQLERINVYYNEASGGRYVPRAVLMDLEPGTMESIRSGPFGKIFRPDNFVFGQSGAGNNWAKGHYTEGAELIDSVLDVVRKEAENCDCLQGFQVCHSLGGGTGSGMGTLLISKIREEYPDRMMLTFSVFPSPKVSDTVVEPYNATLSVHQLVENADECMVLDNEALYDICFRTLKLSTPSFGDLNHLISATMSGVTCCLRFPGQLNSDLRKLAVNLIPFPRLHFFMVGFAPLTSRGSQQYVSLTVPELTQQMWDAKNMMCAADPRHGRYLTASAMFRGKMSTKEVDEQIINVQNKNSSYFVEWIPNNVKSSVCDIPPKNLKMSSTFIGNSTSIQEMFRRVSEQFTAMFRRKAFLHWYTGEGMDEMEFTEAESNMNDLVAEYQQYQDAIAEEEDEYEEEGEEQYDEQ</sequence>